<accession>A8W3J7</accession>
<feature type="chain" id="PRO_0000322055" description="Photosystem II reaction center protein J">
    <location>
        <begin position="1"/>
        <end position="40"/>
    </location>
</feature>
<feature type="transmembrane region" description="Helical" evidence="1">
    <location>
        <begin position="8"/>
        <end position="28"/>
    </location>
</feature>
<gene>
    <name evidence="1" type="primary">psbJ</name>
</gene>
<name>PSBJ_CUSOB</name>
<evidence type="ECO:0000255" key="1">
    <source>
        <dbReference type="HAMAP-Rule" id="MF_01305"/>
    </source>
</evidence>
<evidence type="ECO:0000305" key="2"/>
<protein>
    <recommendedName>
        <fullName evidence="1">Photosystem II reaction center protein J</fullName>
        <shortName evidence="1">PSII-J</shortName>
    </recommendedName>
</protein>
<geneLocation type="plastid"/>
<sequence length="40" mass="4223">MTDTTGRIPLWMIGTLAGILVISLIGIFFYGSYSGLGSSL</sequence>
<reference key="1">
    <citation type="journal article" date="2007" name="BMC Plant Biol.">
        <title>Complete plastid genome sequences suggest strong selection for retention of photosynthetic genes in the parasitic plant genus Cuscuta.</title>
        <authorList>
            <person name="McNeal J.R."/>
            <person name="Kuehl J.V."/>
            <person name="Boore J.L."/>
            <person name="dePamphilis C.W."/>
        </authorList>
    </citation>
    <scope>NUCLEOTIDE SEQUENCE [LARGE SCALE GENOMIC DNA]</scope>
</reference>
<proteinExistence type="inferred from homology"/>
<dbReference type="EMBL" id="EU189133">
    <property type="protein sequence ID" value="ABW20572.1"/>
    <property type="molecule type" value="Genomic_DNA"/>
</dbReference>
<dbReference type="RefSeq" id="YP_001531227.1">
    <property type="nucleotide sequence ID" value="NC_009949.1"/>
</dbReference>
<dbReference type="SMR" id="A8W3J7"/>
<dbReference type="GeneID" id="5714839"/>
<dbReference type="GO" id="GO:0009539">
    <property type="term" value="C:photosystem II reaction center"/>
    <property type="evidence" value="ECO:0007669"/>
    <property type="project" value="InterPro"/>
</dbReference>
<dbReference type="GO" id="GO:0042170">
    <property type="term" value="C:plastid membrane"/>
    <property type="evidence" value="ECO:0007669"/>
    <property type="project" value="UniProtKB-SubCell"/>
</dbReference>
<dbReference type="GO" id="GO:0042651">
    <property type="term" value="C:thylakoid membrane"/>
    <property type="evidence" value="ECO:0007669"/>
    <property type="project" value="UniProtKB-UniRule"/>
</dbReference>
<dbReference type="GO" id="GO:0015979">
    <property type="term" value="P:photosynthesis"/>
    <property type="evidence" value="ECO:0007669"/>
    <property type="project" value="UniProtKB-UniRule"/>
</dbReference>
<dbReference type="Gene3D" id="6.10.250.2070">
    <property type="match status" value="1"/>
</dbReference>
<dbReference type="HAMAP" id="MF_01305">
    <property type="entry name" value="PSII_PsbJ"/>
    <property type="match status" value="1"/>
</dbReference>
<dbReference type="InterPro" id="IPR002682">
    <property type="entry name" value="PSII_PsbJ"/>
</dbReference>
<dbReference type="InterPro" id="IPR037267">
    <property type="entry name" value="PSII_PsbJ_sf"/>
</dbReference>
<dbReference type="NCBIfam" id="NF002722">
    <property type="entry name" value="PRK02565.1"/>
    <property type="match status" value="1"/>
</dbReference>
<dbReference type="PANTHER" id="PTHR34812">
    <property type="entry name" value="PHOTOSYSTEM II REACTION CENTER PROTEIN J"/>
    <property type="match status" value="1"/>
</dbReference>
<dbReference type="PANTHER" id="PTHR34812:SF3">
    <property type="entry name" value="PHOTOSYSTEM II REACTION CENTER PROTEIN J"/>
    <property type="match status" value="1"/>
</dbReference>
<dbReference type="Pfam" id="PF01788">
    <property type="entry name" value="PsbJ"/>
    <property type="match status" value="1"/>
</dbReference>
<dbReference type="SUPFAM" id="SSF161021">
    <property type="entry name" value="Photosystem II reaction center protein J, PsbJ"/>
    <property type="match status" value="1"/>
</dbReference>
<keyword id="KW-0472">Membrane</keyword>
<keyword id="KW-0602">Photosynthesis</keyword>
<keyword id="KW-0604">Photosystem II</keyword>
<keyword id="KW-0934">Plastid</keyword>
<keyword id="KW-0674">Reaction center</keyword>
<keyword id="KW-0812">Transmembrane</keyword>
<keyword id="KW-1133">Transmembrane helix</keyword>
<organism>
    <name type="scientific">Cuscuta obtusiflora</name>
    <name type="common">Peruvian dodder</name>
    <dbReference type="NCBI Taxonomy" id="437280"/>
    <lineage>
        <taxon>Eukaryota</taxon>
        <taxon>Viridiplantae</taxon>
        <taxon>Streptophyta</taxon>
        <taxon>Embryophyta</taxon>
        <taxon>Tracheophyta</taxon>
        <taxon>Spermatophyta</taxon>
        <taxon>Magnoliopsida</taxon>
        <taxon>eudicotyledons</taxon>
        <taxon>Gunneridae</taxon>
        <taxon>Pentapetalae</taxon>
        <taxon>asterids</taxon>
        <taxon>lamiids</taxon>
        <taxon>Solanales</taxon>
        <taxon>Convolvulaceae</taxon>
        <taxon>Cuscuteae</taxon>
        <taxon>Cuscuta</taxon>
        <taxon>Cuscuta subgen. Grammica</taxon>
        <taxon>Cuscuta sect. Cleistogrammica</taxon>
    </lineage>
</organism>
<comment type="function">
    <text evidence="1">One of the components of the core complex of photosystem II (PSII). PSII is a light-driven water:plastoquinone oxidoreductase that uses light energy to abstract electrons from H(2)O, generating O(2) and a proton gradient subsequently used for ATP formation. It consists of a core antenna complex that captures photons, and an electron transfer chain that converts photonic excitation into a charge separation.</text>
</comment>
<comment type="subunit">
    <text evidence="1">PSII is composed of 1 copy each of membrane proteins PsbA, PsbB, PsbC, PsbD, PsbE, PsbF, PsbH, PsbI, PsbJ, PsbK, PsbL, PsbM, PsbT, PsbX, PsbY, PsbZ, Psb30/Ycf12, at least 3 peripheral proteins of the oxygen-evolving complex and a large number of cofactors. It forms dimeric complexes.</text>
</comment>
<comment type="subcellular location">
    <subcellularLocation>
        <location evidence="1">Plastid membrane</location>
        <topology evidence="1">Single-pass membrane protein</topology>
    </subcellularLocation>
</comment>
<comment type="similarity">
    <text evidence="1">Belongs to the PsbJ family.</text>
</comment>
<comment type="caution">
    <text evidence="2">Only inflorescences, fruits, starved seedlings and stressed stem tips are green in this organism.</text>
</comment>